<gene>
    <name type="primary">uspB</name>
    <name type="synonym">yhiO</name>
    <name type="ordered locus">b3494</name>
    <name type="ordered locus">JW3461</name>
</gene>
<keyword id="KW-0997">Cell inner membrane</keyword>
<keyword id="KW-1003">Cell membrane</keyword>
<keyword id="KW-0472">Membrane</keyword>
<keyword id="KW-1185">Reference proteome</keyword>
<keyword id="KW-0812">Transmembrane</keyword>
<keyword id="KW-1133">Transmembrane helix</keyword>
<evidence type="ECO:0000255" key="1"/>
<evidence type="ECO:0000269" key="2">
    <source>
    </source>
</evidence>
<evidence type="ECO:0000305" key="3"/>
<reference key="1">
    <citation type="journal article" date="1994" name="Nucleic Acids Res.">
        <title>Analysis of the Escherichia coli genome. V. DNA sequence of the region from 76.0 to 81.5 minutes.</title>
        <authorList>
            <person name="Sofia H.J."/>
            <person name="Burland V."/>
            <person name="Daniels D.L."/>
            <person name="Plunkett G. III"/>
            <person name="Blattner F.R."/>
        </authorList>
    </citation>
    <scope>NUCLEOTIDE SEQUENCE [LARGE SCALE GENOMIC DNA]</scope>
    <source>
        <strain>K12 / MG1655 / ATCC 47076</strain>
    </source>
</reference>
<reference key="2">
    <citation type="journal article" date="1997" name="Science">
        <title>The complete genome sequence of Escherichia coli K-12.</title>
        <authorList>
            <person name="Blattner F.R."/>
            <person name="Plunkett G. III"/>
            <person name="Bloch C.A."/>
            <person name="Perna N.T."/>
            <person name="Burland V."/>
            <person name="Riley M."/>
            <person name="Collado-Vides J."/>
            <person name="Glasner J.D."/>
            <person name="Rode C.K."/>
            <person name="Mayhew G.F."/>
            <person name="Gregor J."/>
            <person name="Davis N.W."/>
            <person name="Kirkpatrick H.A."/>
            <person name="Goeden M.A."/>
            <person name="Rose D.J."/>
            <person name="Mau B."/>
            <person name="Shao Y."/>
        </authorList>
    </citation>
    <scope>NUCLEOTIDE SEQUENCE [LARGE SCALE GENOMIC DNA]</scope>
    <source>
        <strain>K12 / MG1655 / ATCC 47076</strain>
    </source>
</reference>
<reference key="3">
    <citation type="journal article" date="2006" name="Mol. Syst. Biol.">
        <title>Highly accurate genome sequences of Escherichia coli K-12 strains MG1655 and W3110.</title>
        <authorList>
            <person name="Hayashi K."/>
            <person name="Morooka N."/>
            <person name="Yamamoto Y."/>
            <person name="Fujita K."/>
            <person name="Isono K."/>
            <person name="Choi S."/>
            <person name="Ohtsubo E."/>
            <person name="Baba T."/>
            <person name="Wanner B.L."/>
            <person name="Mori H."/>
            <person name="Horiuchi T."/>
        </authorList>
    </citation>
    <scope>NUCLEOTIDE SEQUENCE [LARGE SCALE GENOMIC DNA]</scope>
    <source>
        <strain>K12 / W3110 / ATCC 27325 / DSM 5911</strain>
    </source>
</reference>
<reference key="4">
    <citation type="journal article" date="1998" name="J. Bacteriol.">
        <title>uspB, a new sigmaS-regulated gene in Escherichia coli which is required for stationary-phase resistance to ethanol.</title>
        <authorList>
            <person name="Farewell A."/>
            <person name="Kvint K."/>
            <person name="Nystroem T."/>
        </authorList>
    </citation>
    <scope>CHARACTERIZATION</scope>
    <scope>DISRUPTION PHENOTYPE</scope>
</reference>
<reference key="5">
    <citation type="journal article" date="2005" name="Science">
        <title>Global topology analysis of the Escherichia coli inner membrane proteome.</title>
        <authorList>
            <person name="Daley D.O."/>
            <person name="Rapp M."/>
            <person name="Granseth E."/>
            <person name="Melen K."/>
            <person name="Drew D."/>
            <person name="von Heijne G."/>
        </authorList>
    </citation>
    <scope>TOPOLOGY [LARGE SCALE ANALYSIS]</scope>
    <source>
        <strain>K12 / MG1655 / ATCC 47076</strain>
    </source>
</reference>
<organism>
    <name type="scientific">Escherichia coli (strain K12)</name>
    <dbReference type="NCBI Taxonomy" id="83333"/>
    <lineage>
        <taxon>Bacteria</taxon>
        <taxon>Pseudomonadati</taxon>
        <taxon>Pseudomonadota</taxon>
        <taxon>Gammaproteobacteria</taxon>
        <taxon>Enterobacterales</taxon>
        <taxon>Enterobacteriaceae</taxon>
        <taxon>Escherichia</taxon>
    </lineage>
</organism>
<sequence>MISTVALFWALCVVCIVNMARYFSSLRALLVVLRNCDPLLYQYVDGGGFFTSHGQPNKQVRLVWYIYAQRYRDHHDDEFIRRCERVRRQFILTSALCGLVVVSLIALMIWH</sequence>
<feature type="chain" id="PRO_0000212040" description="Universal stress protein B">
    <location>
        <begin position="1"/>
        <end position="111"/>
    </location>
</feature>
<feature type="transmembrane region" description="Helical" evidence="1">
    <location>
        <begin position="1"/>
        <end position="21"/>
    </location>
</feature>
<feature type="topological domain" description="Cytoplasmic" evidence="1">
    <location>
        <begin position="22"/>
        <end position="89"/>
    </location>
</feature>
<feature type="transmembrane region" description="Helical" evidence="1">
    <location>
        <begin position="90"/>
        <end position="110"/>
    </location>
</feature>
<feature type="topological domain" description="Periplasmic" evidence="1">
    <location>
        <position position="111"/>
    </location>
</feature>
<proteinExistence type="evidence at protein level"/>
<comment type="subcellular location">
    <subcellularLocation>
        <location>Cell inner membrane</location>
        <topology>Multi-pass membrane protein</topology>
    </subcellularLocation>
</comment>
<comment type="induction">
    <text>By growth arrest in general, by carbon, phosphate, and nitrogen starvation as well as osmotic shock and oxidative stress.</text>
</comment>
<comment type="disruption phenotype">
    <text evidence="2">Cells are sensitive to exposure to ethanol but not heat in stationary phase.</text>
</comment>
<comment type="miscellaneous">
    <text>Overexpression of uspB causes cell death in stationary phase.</text>
</comment>
<comment type="similarity">
    <text evidence="3">Belongs to the universal stress protein B family.</text>
</comment>
<dbReference type="EMBL" id="U00039">
    <property type="protein sequence ID" value="AAB18470.1"/>
    <property type="molecule type" value="Genomic_DNA"/>
</dbReference>
<dbReference type="EMBL" id="U00096">
    <property type="protein sequence ID" value="AAC76519.1"/>
    <property type="molecule type" value="Genomic_DNA"/>
</dbReference>
<dbReference type="EMBL" id="AP009048">
    <property type="protein sequence ID" value="BAE77800.1"/>
    <property type="molecule type" value="Genomic_DNA"/>
</dbReference>
<dbReference type="PIR" id="S47714">
    <property type="entry name" value="S47714"/>
</dbReference>
<dbReference type="RefSeq" id="NP_417951.1">
    <property type="nucleotide sequence ID" value="NC_000913.3"/>
</dbReference>
<dbReference type="RefSeq" id="WP_000626187.1">
    <property type="nucleotide sequence ID" value="NZ_STEB01000046.1"/>
</dbReference>
<dbReference type="SMR" id="P0A8S5"/>
<dbReference type="BioGRID" id="4262095">
    <property type="interactions" value="14"/>
</dbReference>
<dbReference type="FunCoup" id="P0A8S5">
    <property type="interactions" value="80"/>
</dbReference>
<dbReference type="STRING" id="511145.b3494"/>
<dbReference type="TCDB" id="9.B.4.1.1">
    <property type="family name" value="the universal stress protein-b (uspb) family"/>
</dbReference>
<dbReference type="PaxDb" id="511145-b3494"/>
<dbReference type="DNASU" id="948008"/>
<dbReference type="EnsemblBacteria" id="AAC76519">
    <property type="protein sequence ID" value="AAC76519"/>
    <property type="gene ID" value="b3494"/>
</dbReference>
<dbReference type="GeneID" id="93778499"/>
<dbReference type="GeneID" id="948008"/>
<dbReference type="KEGG" id="ecj:JW3461"/>
<dbReference type="KEGG" id="eco:b3494"/>
<dbReference type="KEGG" id="ecoc:C3026_18925"/>
<dbReference type="PATRIC" id="fig|1411691.4.peg.3228"/>
<dbReference type="EchoBASE" id="EB2143"/>
<dbReference type="eggNOG" id="ENOG502ZP3V">
    <property type="taxonomic scope" value="Bacteria"/>
</dbReference>
<dbReference type="HOGENOM" id="CLU_151816_0_0_6"/>
<dbReference type="InParanoid" id="P0A8S5"/>
<dbReference type="OMA" id="THGQLNK"/>
<dbReference type="OrthoDB" id="6432605at2"/>
<dbReference type="PhylomeDB" id="P0A8S5"/>
<dbReference type="BioCyc" id="EcoCyc:EG12231-MONOMER"/>
<dbReference type="PRO" id="PR:P0A8S5"/>
<dbReference type="Proteomes" id="UP000000625">
    <property type="component" value="Chromosome"/>
</dbReference>
<dbReference type="GO" id="GO:0005886">
    <property type="term" value="C:plasma membrane"/>
    <property type="evidence" value="ECO:0000314"/>
    <property type="project" value="EcoCyc"/>
</dbReference>
<dbReference type="GO" id="GO:0006974">
    <property type="term" value="P:DNA damage response"/>
    <property type="evidence" value="ECO:0000315"/>
    <property type="project" value="EcoCyc"/>
</dbReference>
<dbReference type="GO" id="GO:0000725">
    <property type="term" value="P:recombinational repair"/>
    <property type="evidence" value="ECO:0000316"/>
    <property type="project" value="EcoCyc"/>
</dbReference>
<dbReference type="GO" id="GO:0045471">
    <property type="term" value="P:response to ethanol"/>
    <property type="evidence" value="ECO:0000315"/>
    <property type="project" value="EcoCyc"/>
</dbReference>
<dbReference type="HAMAP" id="MF_01088">
    <property type="entry name" value="UspB"/>
    <property type="match status" value="1"/>
</dbReference>
<dbReference type="InterPro" id="IPR019598">
    <property type="entry name" value="Universal_stress_protein_B"/>
</dbReference>
<dbReference type="NCBIfam" id="NF003435">
    <property type="entry name" value="PRK04960.1"/>
    <property type="match status" value="1"/>
</dbReference>
<dbReference type="Pfam" id="PF10625">
    <property type="entry name" value="UspB"/>
    <property type="match status" value="1"/>
</dbReference>
<name>USPB_ECOLI</name>
<accession>P0A8S5</accession>
<accession>P37632</accession>
<accession>Q2M7F6</accession>
<protein>
    <recommendedName>
        <fullName>Universal stress protein B</fullName>
    </recommendedName>
</protein>